<reference key="1">
    <citation type="journal article" date="2004" name="Mol. Phylogenet. Evol.">
        <title>A phylogeny of the extant Phocidae inferred from complete mitochondrial DNA coding regions.</title>
        <authorList>
            <person name="Davis C.S."/>
            <person name="Delisle I."/>
            <person name="Stirling I."/>
            <person name="Siniff D.B."/>
            <person name="Strobeck C."/>
        </authorList>
    </citation>
    <scope>NUCLEOTIDE SEQUENCE [GENOMIC DNA]</scope>
</reference>
<keyword id="KW-0249">Electron transport</keyword>
<keyword id="KW-0349">Heme</keyword>
<keyword id="KW-0408">Iron</keyword>
<keyword id="KW-0472">Membrane</keyword>
<keyword id="KW-0479">Metal-binding</keyword>
<keyword id="KW-0496">Mitochondrion</keyword>
<keyword id="KW-0999">Mitochondrion inner membrane</keyword>
<keyword id="KW-0679">Respiratory chain</keyword>
<keyword id="KW-0812">Transmembrane</keyword>
<keyword id="KW-1133">Transmembrane helix</keyword>
<keyword id="KW-0813">Transport</keyword>
<keyword id="KW-0830">Ubiquinone</keyword>
<sequence length="379" mass="42572">MTNIRKTHPLAKIINNSFIDLPTPSNISAWWNFGSLLGICLILQILTGLFLAMHYTSDTTTAFSSITHICRDVNYGWIIRYMHANGASMFFICLYMHVGRGLYYGSYTFTETWNIGIILLFTIMATAFMGYVLPWGQMSFWGATVITNLLSAIPYIGTDLVQWIWGGFSVDKATLTRFFAFHFILPFVVSALAAVHLLFLHETGSNNPSGIPSNSDKIPFHPYYTIKDILGALLLILTLMLLVLFSPDLLGDPDNYTPANPLSTPPHIKPEWYFLFAYAILRSIPNKLGGVLALALSILILAIIPLLHTSKQRGMMFRPISQCLFWLLVADLLTLTWIGGQPVEHPYITIGQLASILYFTILLVLMPITSIIENNILKW</sequence>
<comment type="function">
    <text evidence="2">Component of the ubiquinol-cytochrome c reductase complex (complex III or cytochrome b-c1 complex) that is part of the mitochondrial respiratory chain. The b-c1 complex mediates electron transfer from ubiquinol to cytochrome c. Contributes to the generation of a proton gradient across the mitochondrial membrane that is then used for ATP synthesis.</text>
</comment>
<comment type="cofactor">
    <cofactor evidence="2">
        <name>heme b</name>
        <dbReference type="ChEBI" id="CHEBI:60344"/>
    </cofactor>
    <text evidence="2">Binds 2 heme b groups non-covalently.</text>
</comment>
<comment type="subunit">
    <text evidence="2">The cytochrome bc1 complex contains 11 subunits: 3 respiratory subunits (MT-CYB, CYC1 and UQCRFS1), 2 core proteins (UQCRC1 and UQCRC2) and 6 low-molecular weight proteins (UQCRH/QCR6, UQCRB/QCR7, UQCRQ/QCR8, UQCR10/QCR9, UQCR11/QCR10 and a cleavage product of UQCRFS1). This cytochrome bc1 complex then forms a dimer.</text>
</comment>
<comment type="subcellular location">
    <subcellularLocation>
        <location evidence="2">Mitochondrion inner membrane</location>
        <topology evidence="2">Multi-pass membrane protein</topology>
    </subcellularLocation>
</comment>
<comment type="miscellaneous">
    <text evidence="1">Heme 1 (or BL or b562) is low-potential and absorbs at about 562 nm, and heme 2 (or BH or b566) is high-potential and absorbs at about 566 nm.</text>
</comment>
<comment type="similarity">
    <text evidence="3 4">Belongs to the cytochrome b family.</text>
</comment>
<comment type="caution">
    <text evidence="2">The full-length protein contains only eight transmembrane helices, not nine as predicted by bioinformatics tools.</text>
</comment>
<proteinExistence type="inferred from homology"/>
<dbReference type="EMBL" id="AY377322">
    <property type="protein sequence ID" value="AAQ95101.1"/>
    <property type="molecule type" value="Genomic_DNA"/>
</dbReference>
<dbReference type="SMR" id="Q678S8"/>
<dbReference type="GO" id="GO:0005743">
    <property type="term" value="C:mitochondrial inner membrane"/>
    <property type="evidence" value="ECO:0007669"/>
    <property type="project" value="UniProtKB-SubCell"/>
</dbReference>
<dbReference type="GO" id="GO:0045275">
    <property type="term" value="C:respiratory chain complex III"/>
    <property type="evidence" value="ECO:0007669"/>
    <property type="project" value="InterPro"/>
</dbReference>
<dbReference type="GO" id="GO:0046872">
    <property type="term" value="F:metal ion binding"/>
    <property type="evidence" value="ECO:0007669"/>
    <property type="project" value="UniProtKB-KW"/>
</dbReference>
<dbReference type="GO" id="GO:0008121">
    <property type="term" value="F:ubiquinol-cytochrome-c reductase activity"/>
    <property type="evidence" value="ECO:0007669"/>
    <property type="project" value="InterPro"/>
</dbReference>
<dbReference type="GO" id="GO:0006122">
    <property type="term" value="P:mitochondrial electron transport, ubiquinol to cytochrome c"/>
    <property type="evidence" value="ECO:0007669"/>
    <property type="project" value="TreeGrafter"/>
</dbReference>
<dbReference type="CDD" id="cd00290">
    <property type="entry name" value="cytochrome_b_C"/>
    <property type="match status" value="1"/>
</dbReference>
<dbReference type="CDD" id="cd00284">
    <property type="entry name" value="Cytochrome_b_N"/>
    <property type="match status" value="1"/>
</dbReference>
<dbReference type="FunFam" id="1.20.810.10:FF:000002">
    <property type="entry name" value="Cytochrome b"/>
    <property type="match status" value="1"/>
</dbReference>
<dbReference type="Gene3D" id="1.20.810.10">
    <property type="entry name" value="Cytochrome Bc1 Complex, Chain C"/>
    <property type="match status" value="1"/>
</dbReference>
<dbReference type="InterPro" id="IPR005798">
    <property type="entry name" value="Cyt_b/b6_C"/>
</dbReference>
<dbReference type="InterPro" id="IPR036150">
    <property type="entry name" value="Cyt_b/b6_C_sf"/>
</dbReference>
<dbReference type="InterPro" id="IPR005797">
    <property type="entry name" value="Cyt_b/b6_N"/>
</dbReference>
<dbReference type="InterPro" id="IPR027387">
    <property type="entry name" value="Cytb/b6-like_sf"/>
</dbReference>
<dbReference type="InterPro" id="IPR030689">
    <property type="entry name" value="Cytochrome_b"/>
</dbReference>
<dbReference type="InterPro" id="IPR048260">
    <property type="entry name" value="Cytochrome_b_C_euk/bac"/>
</dbReference>
<dbReference type="InterPro" id="IPR048259">
    <property type="entry name" value="Cytochrome_b_N_euk/bac"/>
</dbReference>
<dbReference type="InterPro" id="IPR016174">
    <property type="entry name" value="Di-haem_cyt_TM"/>
</dbReference>
<dbReference type="PANTHER" id="PTHR19271">
    <property type="entry name" value="CYTOCHROME B"/>
    <property type="match status" value="1"/>
</dbReference>
<dbReference type="PANTHER" id="PTHR19271:SF16">
    <property type="entry name" value="CYTOCHROME B"/>
    <property type="match status" value="1"/>
</dbReference>
<dbReference type="Pfam" id="PF00032">
    <property type="entry name" value="Cytochrom_B_C"/>
    <property type="match status" value="1"/>
</dbReference>
<dbReference type="Pfam" id="PF00033">
    <property type="entry name" value="Cytochrome_B"/>
    <property type="match status" value="1"/>
</dbReference>
<dbReference type="PIRSF" id="PIRSF038885">
    <property type="entry name" value="COB"/>
    <property type="match status" value="1"/>
</dbReference>
<dbReference type="SUPFAM" id="SSF81648">
    <property type="entry name" value="a domain/subunit of cytochrome bc1 complex (Ubiquinol-cytochrome c reductase)"/>
    <property type="match status" value="1"/>
</dbReference>
<dbReference type="SUPFAM" id="SSF81342">
    <property type="entry name" value="Transmembrane di-heme cytochromes"/>
    <property type="match status" value="1"/>
</dbReference>
<dbReference type="PROSITE" id="PS51003">
    <property type="entry name" value="CYTB_CTER"/>
    <property type="match status" value="1"/>
</dbReference>
<dbReference type="PROSITE" id="PS51002">
    <property type="entry name" value="CYTB_NTER"/>
    <property type="match status" value="1"/>
</dbReference>
<protein>
    <recommendedName>
        <fullName>Cytochrome b</fullName>
    </recommendedName>
    <alternativeName>
        <fullName>Complex III subunit 3</fullName>
    </alternativeName>
    <alternativeName>
        <fullName>Complex III subunit III</fullName>
    </alternativeName>
    <alternativeName>
        <fullName>Cytochrome b-c1 complex subunit 3</fullName>
    </alternativeName>
    <alternativeName>
        <fullName>Ubiquinol-cytochrome-c reductase complex cytochrome b subunit</fullName>
    </alternativeName>
</protein>
<gene>
    <name type="primary">MT-CYB</name>
    <name type="synonym">COB</name>
    <name type="synonym">CYTB</name>
    <name type="synonym">MTCYB</name>
</gene>
<feature type="chain" id="PRO_0000061316" description="Cytochrome b">
    <location>
        <begin position="1"/>
        <end position="379"/>
    </location>
</feature>
<feature type="transmembrane region" description="Helical" evidence="2">
    <location>
        <begin position="33"/>
        <end position="53"/>
    </location>
</feature>
<feature type="transmembrane region" description="Helical" evidence="2">
    <location>
        <begin position="77"/>
        <end position="98"/>
    </location>
</feature>
<feature type="transmembrane region" description="Helical" evidence="2">
    <location>
        <begin position="113"/>
        <end position="133"/>
    </location>
</feature>
<feature type="transmembrane region" description="Helical" evidence="2">
    <location>
        <begin position="178"/>
        <end position="198"/>
    </location>
</feature>
<feature type="transmembrane region" description="Helical" evidence="2">
    <location>
        <begin position="226"/>
        <end position="246"/>
    </location>
</feature>
<feature type="transmembrane region" description="Helical" evidence="2">
    <location>
        <begin position="288"/>
        <end position="308"/>
    </location>
</feature>
<feature type="transmembrane region" description="Helical" evidence="2">
    <location>
        <begin position="320"/>
        <end position="340"/>
    </location>
</feature>
<feature type="transmembrane region" description="Helical" evidence="2">
    <location>
        <begin position="347"/>
        <end position="367"/>
    </location>
</feature>
<feature type="binding site" description="axial binding residue" evidence="2">
    <location>
        <position position="83"/>
    </location>
    <ligand>
        <name>heme b</name>
        <dbReference type="ChEBI" id="CHEBI:60344"/>
        <label>b562</label>
    </ligand>
    <ligandPart>
        <name>Fe</name>
        <dbReference type="ChEBI" id="CHEBI:18248"/>
    </ligandPart>
</feature>
<feature type="binding site" description="axial binding residue" evidence="2">
    <location>
        <position position="97"/>
    </location>
    <ligand>
        <name>heme b</name>
        <dbReference type="ChEBI" id="CHEBI:60344"/>
        <label>b566</label>
    </ligand>
    <ligandPart>
        <name>Fe</name>
        <dbReference type="ChEBI" id="CHEBI:18248"/>
    </ligandPart>
</feature>
<feature type="binding site" description="axial binding residue" evidence="2">
    <location>
        <position position="182"/>
    </location>
    <ligand>
        <name>heme b</name>
        <dbReference type="ChEBI" id="CHEBI:60344"/>
        <label>b562</label>
    </ligand>
    <ligandPart>
        <name>Fe</name>
        <dbReference type="ChEBI" id="CHEBI:18248"/>
    </ligandPart>
</feature>
<feature type="binding site" description="axial binding residue" evidence="2">
    <location>
        <position position="196"/>
    </location>
    <ligand>
        <name>heme b</name>
        <dbReference type="ChEBI" id="CHEBI:60344"/>
        <label>b566</label>
    </ligand>
    <ligandPart>
        <name>Fe</name>
        <dbReference type="ChEBI" id="CHEBI:18248"/>
    </ligandPart>
</feature>
<feature type="binding site" evidence="2">
    <location>
        <position position="201"/>
    </location>
    <ligand>
        <name>a ubiquinone</name>
        <dbReference type="ChEBI" id="CHEBI:16389"/>
    </ligand>
</feature>
<organism>
    <name type="scientific">Ommatophoca rossii</name>
    <name type="common">Ross seal</name>
    <dbReference type="NCBI Taxonomy" id="207342"/>
    <lineage>
        <taxon>Eukaryota</taxon>
        <taxon>Metazoa</taxon>
        <taxon>Chordata</taxon>
        <taxon>Craniata</taxon>
        <taxon>Vertebrata</taxon>
        <taxon>Euteleostomi</taxon>
        <taxon>Mammalia</taxon>
        <taxon>Eutheria</taxon>
        <taxon>Laurasiatheria</taxon>
        <taxon>Carnivora</taxon>
        <taxon>Caniformia</taxon>
        <taxon>Pinnipedia</taxon>
        <taxon>Phocidae</taxon>
        <taxon>Monachinae</taxon>
        <taxon>Lobodontini</taxon>
        <taxon>Ommatophoca</taxon>
    </lineage>
</organism>
<geneLocation type="mitochondrion"/>
<name>CYB_OMMRO</name>
<evidence type="ECO:0000250" key="1"/>
<evidence type="ECO:0000250" key="2">
    <source>
        <dbReference type="UniProtKB" id="P00157"/>
    </source>
</evidence>
<evidence type="ECO:0000255" key="3">
    <source>
        <dbReference type="PROSITE-ProRule" id="PRU00967"/>
    </source>
</evidence>
<evidence type="ECO:0000255" key="4">
    <source>
        <dbReference type="PROSITE-ProRule" id="PRU00968"/>
    </source>
</evidence>
<accession>Q678S8</accession>